<proteinExistence type="inferred from homology"/>
<reference key="1">
    <citation type="submission" date="2008-10" db="EMBL/GenBank/DDBJ databases">
        <title>Genome sequence of Bacillus cereus G9842.</title>
        <authorList>
            <person name="Dodson R.J."/>
            <person name="Durkin A.S."/>
            <person name="Rosovitz M.J."/>
            <person name="Rasko D.A."/>
            <person name="Hoffmaster A."/>
            <person name="Ravel J."/>
            <person name="Sutton G."/>
        </authorList>
    </citation>
    <scope>NUCLEOTIDE SEQUENCE [LARGE SCALE GENOMIC DNA]</scope>
    <source>
        <strain>G9842</strain>
    </source>
</reference>
<sequence length="273" mass="29826">MERTIGIDAGGTLTKIAYFNEKRLLTFEKFYSHEQHKIIDWIKNNNGIKQICITGGKSKLLQQLLTGSYKIIELNEFEATLAGVQYILKEEKHAIRNFILTNIGTGTSIHYVYNEQYIRAGGTGVGGGTIMGLSKLLTNIDHFEDVIPLTKVGSRKELDITVGDIYGGILSPIDNNLTASNFGKAAITESNNSSSDILATVQGLVGEVVTALSLQFAETKNIEHIIYIGSTLCNNVQLQHIISSYTEYQNKTPIFLQDGGNSGAIGALLHATK</sequence>
<comment type="function">
    <text evidence="1">Catalyzes the phosphorylation of pantothenate (Pan), the first step in CoA biosynthesis.</text>
</comment>
<comment type="catalytic activity">
    <reaction evidence="1">
        <text>(R)-pantothenate + ATP = (R)-4'-phosphopantothenate + ADP + H(+)</text>
        <dbReference type="Rhea" id="RHEA:16373"/>
        <dbReference type="ChEBI" id="CHEBI:10986"/>
        <dbReference type="ChEBI" id="CHEBI:15378"/>
        <dbReference type="ChEBI" id="CHEBI:29032"/>
        <dbReference type="ChEBI" id="CHEBI:30616"/>
        <dbReference type="ChEBI" id="CHEBI:456216"/>
        <dbReference type="EC" id="2.7.1.33"/>
    </reaction>
</comment>
<comment type="pathway">
    <text evidence="1">Cofactor biosynthesis; coenzyme A biosynthesis; CoA from (R)-pantothenate: step 1/5.</text>
</comment>
<comment type="subunit">
    <text evidence="1">Homodimer.</text>
</comment>
<comment type="subcellular location">
    <subcellularLocation>
        <location evidence="1">Cytoplasm</location>
    </subcellularLocation>
</comment>
<comment type="similarity">
    <text evidence="1">Belongs to the type II pantothenate kinase family.</text>
</comment>
<evidence type="ECO:0000255" key="1">
    <source>
        <dbReference type="HAMAP-Rule" id="MF_01273"/>
    </source>
</evidence>
<feature type="chain" id="PRO_1000140207" description="Type II pantothenate kinase">
    <location>
        <begin position="1"/>
        <end position="273"/>
    </location>
</feature>
<feature type="active site" description="Proton acceptor" evidence="1">
    <location>
        <position position="76"/>
    </location>
</feature>
<feature type="binding site" evidence="1">
    <location>
        <begin position="8"/>
        <end position="15"/>
    </location>
    <ligand>
        <name>ATP</name>
        <dbReference type="ChEBI" id="CHEBI:30616"/>
    </ligand>
</feature>
<feature type="binding site" evidence="1">
    <location>
        <position position="105"/>
    </location>
    <ligand>
        <name>ATP</name>
        <dbReference type="ChEBI" id="CHEBI:30616"/>
    </ligand>
</feature>
<feature type="binding site" evidence="1">
    <location>
        <begin position="127"/>
        <end position="131"/>
    </location>
    <ligand>
        <name>ATP</name>
        <dbReference type="ChEBI" id="CHEBI:30616"/>
    </ligand>
</feature>
<feature type="binding site" evidence="1">
    <location>
        <position position="143"/>
    </location>
    <ligand>
        <name>ATP</name>
        <dbReference type="ChEBI" id="CHEBI:30616"/>
    </ligand>
</feature>
<feature type="binding site" evidence="1">
    <location>
        <position position="230"/>
    </location>
    <ligand>
        <name>ATP</name>
        <dbReference type="ChEBI" id="CHEBI:30616"/>
    </ligand>
</feature>
<organism>
    <name type="scientific">Bacillus cereus (strain G9842)</name>
    <dbReference type="NCBI Taxonomy" id="405531"/>
    <lineage>
        <taxon>Bacteria</taxon>
        <taxon>Bacillati</taxon>
        <taxon>Bacillota</taxon>
        <taxon>Bacilli</taxon>
        <taxon>Bacillales</taxon>
        <taxon>Bacillaceae</taxon>
        <taxon>Bacillus</taxon>
        <taxon>Bacillus cereus group</taxon>
    </lineage>
</organism>
<gene>
    <name evidence="1" type="primary">coaW</name>
    <name type="ordered locus">BCG9842_B2329</name>
</gene>
<name>COAW_BACC2</name>
<keyword id="KW-0067">ATP-binding</keyword>
<keyword id="KW-0173">Coenzyme A biosynthesis</keyword>
<keyword id="KW-0963">Cytoplasm</keyword>
<keyword id="KW-0418">Kinase</keyword>
<keyword id="KW-0547">Nucleotide-binding</keyword>
<keyword id="KW-0808">Transferase</keyword>
<accession>B7IKP3</accession>
<dbReference type="EC" id="2.7.1.33" evidence="1"/>
<dbReference type="EMBL" id="CP001186">
    <property type="protein sequence ID" value="ACK94042.1"/>
    <property type="molecule type" value="Genomic_DNA"/>
</dbReference>
<dbReference type="RefSeq" id="WP_000442499.1">
    <property type="nucleotide sequence ID" value="NC_011772.1"/>
</dbReference>
<dbReference type="SMR" id="B7IKP3"/>
<dbReference type="KEGG" id="bcg:BCG9842_B2329"/>
<dbReference type="HOGENOM" id="CLU_087521_1_0_9"/>
<dbReference type="UniPathway" id="UPA00241">
    <property type="reaction ID" value="UER00352"/>
</dbReference>
<dbReference type="Proteomes" id="UP000006744">
    <property type="component" value="Chromosome"/>
</dbReference>
<dbReference type="GO" id="GO:0005829">
    <property type="term" value="C:cytosol"/>
    <property type="evidence" value="ECO:0007669"/>
    <property type="project" value="TreeGrafter"/>
</dbReference>
<dbReference type="GO" id="GO:0005524">
    <property type="term" value="F:ATP binding"/>
    <property type="evidence" value="ECO:0007669"/>
    <property type="project" value="UniProtKB-UniRule"/>
</dbReference>
<dbReference type="GO" id="GO:0004594">
    <property type="term" value="F:pantothenate kinase activity"/>
    <property type="evidence" value="ECO:0007669"/>
    <property type="project" value="UniProtKB-UniRule"/>
</dbReference>
<dbReference type="GO" id="GO:0015937">
    <property type="term" value="P:coenzyme A biosynthetic process"/>
    <property type="evidence" value="ECO:0007669"/>
    <property type="project" value="UniProtKB-UniRule"/>
</dbReference>
<dbReference type="CDD" id="cd24085">
    <property type="entry name" value="ASKHA_NBD_PanK-II_bac"/>
    <property type="match status" value="1"/>
</dbReference>
<dbReference type="Gene3D" id="3.30.420.40">
    <property type="match status" value="1"/>
</dbReference>
<dbReference type="HAMAP" id="MF_01273">
    <property type="entry name" value="Pantothen_kinase_2"/>
    <property type="match status" value="1"/>
</dbReference>
<dbReference type="InterPro" id="IPR043129">
    <property type="entry name" value="ATPase_NBD"/>
</dbReference>
<dbReference type="InterPro" id="IPR004567">
    <property type="entry name" value="Type_II_PanK"/>
</dbReference>
<dbReference type="InterPro" id="IPR011602">
    <property type="entry name" value="Type_II_PanK_bac"/>
</dbReference>
<dbReference type="NCBIfam" id="TIGR00555">
    <property type="entry name" value="panK_eukar"/>
    <property type="match status" value="1"/>
</dbReference>
<dbReference type="NCBIfam" id="NF009842">
    <property type="entry name" value="PRK13317.1"/>
    <property type="match status" value="1"/>
</dbReference>
<dbReference type="PANTHER" id="PTHR12280:SF20">
    <property type="entry name" value="4'-PHOSPHOPANTETHEINE PHOSPHATASE"/>
    <property type="match status" value="1"/>
</dbReference>
<dbReference type="PANTHER" id="PTHR12280">
    <property type="entry name" value="PANTOTHENATE KINASE"/>
    <property type="match status" value="1"/>
</dbReference>
<dbReference type="Pfam" id="PF03630">
    <property type="entry name" value="Fumble"/>
    <property type="match status" value="1"/>
</dbReference>
<dbReference type="PIRSF" id="PIRSF036940">
    <property type="entry name" value="PanK_bac_aCoA"/>
    <property type="match status" value="1"/>
</dbReference>
<dbReference type="SUPFAM" id="SSF53067">
    <property type="entry name" value="Actin-like ATPase domain"/>
    <property type="match status" value="1"/>
</dbReference>
<protein>
    <recommendedName>
        <fullName evidence="1">Type II pantothenate kinase</fullName>
        <ecNumber evidence="1">2.7.1.33</ecNumber>
    </recommendedName>
    <alternativeName>
        <fullName evidence="1">PanK-II</fullName>
    </alternativeName>
    <alternativeName>
        <fullName evidence="1">Pantothenic acid kinase</fullName>
    </alternativeName>
</protein>